<proteinExistence type="evidence at protein level"/>
<organismHost>
    <name type="scientific">Galliformes</name>
    <dbReference type="NCBI Taxonomy" id="8976"/>
</organismHost>
<reference key="1">
    <citation type="journal article" date="1982" name="J. Virol.">
        <title>DNA sequence of the viral and cellular src gene of chickens. 1. Complete nucleotide sequence of an EcoRI fragment of recovered avian sarcoma virus which codes for gp37 and pp60src.</title>
        <authorList>
            <person name="Takeya T."/>
            <person name="Feldman R.A."/>
            <person name="Hanafusa H."/>
        </authorList>
    </citation>
    <scope>NUCLEOTIDE SEQUENCE [GENOMIC RNA]</scope>
</reference>
<reference key="2">
    <citation type="journal article" date="2005" name="J. Virol.">
        <title>Receptor-induced conformational changes in the SU subunit of the avian sarcoma/leukosis virus A envelope protein: implications for fusion activation.</title>
        <authorList>
            <person name="Delos S.E."/>
            <person name="Godby J.A."/>
            <person name="White J.M."/>
        </authorList>
    </citation>
    <scope>FUNCTION IN FUSION</scope>
</reference>
<reference key="3">
    <citation type="journal article" date="2019" name="Viruses">
        <title>Reverse Engineering Provides Insights on the Evolution of Subgroups A to E Avian Sarcoma and Leukosis Virus Receptor Specificity.</title>
        <authorList>
            <person name="Federspiel M.J."/>
        </authorList>
    </citation>
    <scope>REVIEW</scope>
</reference>
<comment type="function">
    <molecule>Surface protein</molecule>
    <text evidence="3">The surface protein (SU) attaches the virus to the host cell by binding to its receptor (By similarity). This interaction triggers the refolding of the transmembrane protein (TM) thereby unmasking its fusion peptide and the formation of a reactive thiolate to activate its fusogenic potential. Fusion occurs at the host cell plasma membrane (By similarity).</text>
</comment>
<comment type="function">
    <molecule>Transmembrane protein</molecule>
    <text evidence="3">The transmembrane protein (TM) acts as a class I viral fusion protein. Under the current model, the protein has at least 3 conformational states: pre-fusion native state, pre-hairpin intermediate state, and post-fusion hairpin state. During viral and target cell membrane fusion, the coiled coil regions (heptad repeats) assume a trimer-of-hairpins structure, positioning the fusion peptide in close proximity to the C-terminal region of the ectodomain. The formation of this structure appears to drive apposition and subsequent fusion of viral and target cell membranes. Membranes fusion leads to delivery of the nucleocapsid into the cytoplasm.</text>
</comment>
<comment type="subunit">
    <molecule>Surface protein</molecule>
    <text evidence="3">Heterodimer with the transmembrane protein. The mature envelope protein (Env) consists of a trimer of SU-TM heterodimers attached by a labile interchain disulfide bond.</text>
</comment>
<comment type="subunit">
    <molecule>Transmembrane protein</molecule>
    <text evidence="3">Heterodimer with the surface protein. The mature envelope protein (Env) consists of a trimer of SU-TM heterodimers attached by a labile interchain disulfide bond.</text>
</comment>
<comment type="subcellular location">
    <molecule>Transmembrane protein</molecule>
    <subcellularLocation>
        <location evidence="6">Virion membrane</location>
        <topology evidence="5">Single-pass type I membrane protein</topology>
    </subcellularLocation>
    <subcellularLocation>
        <location evidence="6">Host cell membrane</location>
        <topology evidence="5">Single-pass type I membrane protein</topology>
    </subcellularLocation>
</comment>
<comment type="subcellular location">
    <molecule>Surface protein</molecule>
    <subcellularLocation>
        <location evidence="6">Virion membrane</location>
        <topology>Peripheral membrane protein</topology>
    </subcellularLocation>
    <subcellularLocation>
        <location evidence="6">Host cell membrane</location>
        <topology>Peripheral membrane protein</topology>
    </subcellularLocation>
    <text evidence="1">The surface protein is not anchored to the viral envelope, but associates with the extravirion surface through its binding to TM. Both proteins are thought to be concentrated at the site of budding and incorporated into the virions possibly by contacts between the cytoplasmic tail of Env and the N-terminus of Gag (By similarity).</text>
</comment>
<comment type="domain">
    <molecule>Envelope glycoprotein gp95</molecule>
    <text evidence="1">The 17 amino acids long immunosuppressive region is present in many retroviral envelope proteins. Synthetic peptides derived from this relatively conserved sequence inhibit immune function in vitro and in vivo (By similarity).</text>
</comment>
<comment type="PTM">
    <molecule>Envelope glycoprotein gp95</molecule>
    <text evidence="1">Specific enzymatic cleavages in vivo yield mature proteins. Envelope glycoproteins are synthesized as an inactive precursor that is N-glycosylated and processed likely by host cell furin or by a furin-like protease in the Golgi to yield the mature SU and TM proteins. The cleavage site between SU and TM requires the minimal sequence [KR]-X-[KR]-R (By similarity).</text>
</comment>
<comment type="PTM">
    <molecule>Transmembrane protein</molecule>
    <text evidence="2">The transmembrane protein is palmitoylated. Palmitoylation is necessary for glycoprotein function and infectivity.</text>
</comment>
<comment type="similarity">
    <text evidence="6">Belongs to the Alpharetroviruses envelope glycoprotein family.</text>
</comment>
<dbReference type="EMBL" id="K00928">
    <property type="protein sequence ID" value="AAA42564.1"/>
    <property type="molecule type" value="Genomic_RNA"/>
</dbReference>
<dbReference type="SMR" id="P0DTM6"/>
<dbReference type="GO" id="GO:0020002">
    <property type="term" value="C:host cell plasma membrane"/>
    <property type="evidence" value="ECO:0007669"/>
    <property type="project" value="UniProtKB-SubCell"/>
</dbReference>
<dbReference type="GO" id="GO:0016020">
    <property type="term" value="C:membrane"/>
    <property type="evidence" value="ECO:0007669"/>
    <property type="project" value="UniProtKB-KW"/>
</dbReference>
<dbReference type="GO" id="GO:0019031">
    <property type="term" value="C:viral envelope"/>
    <property type="evidence" value="ECO:0007669"/>
    <property type="project" value="UniProtKB-KW"/>
</dbReference>
<dbReference type="GO" id="GO:0055036">
    <property type="term" value="C:virion membrane"/>
    <property type="evidence" value="ECO:0007669"/>
    <property type="project" value="UniProtKB-SubCell"/>
</dbReference>
<dbReference type="GO" id="GO:0019064">
    <property type="term" value="P:fusion of virus membrane with host plasma membrane"/>
    <property type="evidence" value="ECO:0007669"/>
    <property type="project" value="UniProtKB-KW"/>
</dbReference>
<dbReference type="GO" id="GO:0046718">
    <property type="term" value="P:symbiont entry into host cell"/>
    <property type="evidence" value="ECO:0007669"/>
    <property type="project" value="UniProtKB-KW"/>
</dbReference>
<dbReference type="GO" id="GO:0019062">
    <property type="term" value="P:virion attachment to host cell"/>
    <property type="evidence" value="ECO:0007669"/>
    <property type="project" value="UniProtKB-KW"/>
</dbReference>
<dbReference type="CDD" id="cd09949">
    <property type="entry name" value="RSV-like_HR1-HR2"/>
    <property type="match status" value="1"/>
</dbReference>
<dbReference type="Gene3D" id="1.10.287.210">
    <property type="match status" value="1"/>
</dbReference>
<dbReference type="InterPro" id="IPR005166">
    <property type="entry name" value="RSV_p95_env"/>
</dbReference>
<dbReference type="InterPro" id="IPR018154">
    <property type="entry name" value="TLV/ENV_coat_polyprotein"/>
</dbReference>
<dbReference type="PANTHER" id="PTHR10424">
    <property type="entry name" value="VIRAL ENVELOPE PROTEIN"/>
    <property type="match status" value="1"/>
</dbReference>
<dbReference type="Pfam" id="PF03708">
    <property type="entry name" value="Avian_gp85"/>
    <property type="match status" value="1"/>
</dbReference>
<dbReference type="Pfam" id="PF00429">
    <property type="entry name" value="TLV_coat"/>
    <property type="match status" value="1"/>
</dbReference>
<dbReference type="SUPFAM" id="SSF58069">
    <property type="entry name" value="Virus ectodomain"/>
    <property type="match status" value="1"/>
</dbReference>
<evidence type="ECO:0000250" key="1"/>
<evidence type="ECO:0000250" key="2">
    <source>
        <dbReference type="UniProtKB" id="P03396"/>
    </source>
</evidence>
<evidence type="ECO:0000250" key="3">
    <source>
        <dbReference type="UniProtKB" id="P0DTM4"/>
    </source>
</evidence>
<evidence type="ECO:0000255" key="4"/>
<evidence type="ECO:0000303" key="5">
    <source>
    </source>
</evidence>
<evidence type="ECO:0000305" key="6"/>
<keyword id="KW-0165">Cleavage on pair of basic residues</keyword>
<keyword id="KW-0175">Coiled coil</keyword>
<keyword id="KW-1015">Disulfide bond</keyword>
<keyword id="KW-1169">Fusion of virus membrane with host cell membrane</keyword>
<keyword id="KW-1168">Fusion of virus membrane with host membrane</keyword>
<keyword id="KW-0325">Glycoprotein</keyword>
<keyword id="KW-1032">Host cell membrane</keyword>
<keyword id="KW-1043">Host membrane</keyword>
<keyword id="KW-0945">Host-virus interaction</keyword>
<keyword id="KW-0449">Lipoprotein</keyword>
<keyword id="KW-0472">Membrane</keyword>
<keyword id="KW-0564">Palmitate</keyword>
<keyword id="KW-0812">Transmembrane</keyword>
<keyword id="KW-1133">Transmembrane helix</keyword>
<keyword id="KW-1161">Viral attachment to host cell</keyword>
<keyword id="KW-0261">Viral envelope protein</keyword>
<keyword id="KW-1162">Viral penetration into host cytoplasm</keyword>
<keyword id="KW-0946">Virion</keyword>
<keyword id="KW-1160">Virus entry into host cell</keyword>
<feature type="chain" id="PRO_0000457353" description="Envelope glycoprotein gp95">
    <location>
        <begin position="1" status="less than"/>
        <end position="246"/>
    </location>
</feature>
<feature type="chain" id="PRO_0000457354" description="Surface protein" evidence="1">
    <location>
        <begin position="1" status="less than"/>
        <end position="41"/>
    </location>
</feature>
<feature type="chain" id="PRO_0000457355" description="Transmembrane protein" evidence="1">
    <location>
        <begin position="42"/>
        <end position="246"/>
    </location>
</feature>
<feature type="topological domain" description="Extracellular" evidence="4">
    <location>
        <begin position="1" status="less than"/>
        <end position="192"/>
    </location>
</feature>
<feature type="transmembrane region" description="Helical" evidence="4">
    <location>
        <begin position="193"/>
        <end position="213"/>
    </location>
</feature>
<feature type="topological domain" description="Cytoplasmic" evidence="4">
    <location>
        <begin position="214"/>
        <end position="246"/>
    </location>
</feature>
<feature type="region of interest" description="Fusion peptide" evidence="3">
    <location>
        <begin position="58"/>
        <end position="78"/>
    </location>
</feature>
<feature type="region of interest" description="Immunosuppression" evidence="1">
    <location>
        <begin position="114"/>
        <end position="130"/>
    </location>
</feature>
<feature type="coiled-coil region" evidence="4">
    <location>
        <begin position="75"/>
        <end position="125"/>
    </location>
</feature>
<feature type="coiled-coil region" evidence="4">
    <location>
        <begin position="143"/>
        <end position="173"/>
    </location>
</feature>
<feature type="site" description="Cleavage; by host" evidence="2">
    <location>
        <begin position="41"/>
        <end position="42"/>
    </location>
</feature>
<feature type="lipid moiety-binding region" description="S-palmitoyl cysteine; by host" evidence="1">
    <location>
        <position position="205"/>
    </location>
</feature>
<feature type="lipid moiety-binding region" description="S-palmitoyl cysteine; by host" evidence="1">
    <location>
        <position position="208"/>
    </location>
</feature>
<feature type="glycosylation site" description="N-linked (GlcNAc...) asparagine; by host" evidence="4">
    <location>
        <position position="31"/>
    </location>
</feature>
<feature type="glycosylation site" description="N-linked (GlcNAc...) asparagine; by host" evidence="4">
    <location>
        <position position="93"/>
    </location>
</feature>
<feature type="glycosylation site" description="N-linked (GlcNAc...) asparagine; by host" evidence="4">
    <location>
        <position position="141"/>
    </location>
</feature>
<feature type="disulfide bond" evidence="3">
    <location>
        <begin position="50"/>
        <end position="86"/>
    </location>
</feature>
<feature type="disulfide bond" evidence="3">
    <location>
        <begin position="131"/>
        <end position="138"/>
    </location>
</feature>
<feature type="non-terminal residue">
    <location>
        <position position="1"/>
    </location>
</feature>
<protein>
    <recommendedName>
        <fullName>Envelope glycoprotein gp95</fullName>
    </recommendedName>
    <alternativeName>
        <fullName>Env polyprotein</fullName>
    </alternativeName>
    <component>
        <recommendedName>
            <fullName>Surface protein</fullName>
            <shortName>SU</shortName>
        </recommendedName>
        <alternativeName>
            <fullName>Glycoprotein 85</fullName>
            <shortName>gp85</shortName>
        </alternativeName>
    </component>
    <component>
        <recommendedName>
            <fullName>Transmembrane protein</fullName>
            <shortName>TM</shortName>
        </recommendedName>
        <alternativeName>
            <fullName>Glycoprotein 37</fullName>
            <shortName>gp37</shortName>
        </alternativeName>
    </component>
</protein>
<accession>P0DTM6</accession>
<accession>P03397</accession>
<accession>Q03803</accession>
<accession>Q85500</accession>
<organism>
    <name type="scientific">Avian sarcoma virus (strain rASV1441)</name>
    <dbReference type="NCBI Taxonomy" id="11894"/>
    <lineage>
        <taxon>Viruses</taxon>
        <taxon>Riboviria</taxon>
        <taxon>Pararnavirae</taxon>
        <taxon>Artverviricota</taxon>
        <taxon>Revtraviricetes</taxon>
        <taxon>Ortervirales</taxon>
        <taxon>Retroviridae</taxon>
        <taxon>Orthoretrovirinae</taxon>
        <taxon>Alpharetrovirus</taxon>
        <taxon>Avian sarcoma virus</taxon>
    </lineage>
</organism>
<gene>
    <name type="primary">env</name>
</gene>
<sequence length="246" mass="26912">IPSRPVGGPCYLGKLTMLAPNHTDILKILANSSRTGIRRKRSVSHLDDTCSDEVQLWGPTARIFASILAPGVAAAQALKEIERLACWSVKQANLTTSLLGDLLDDVTSIRHAVLQNRAAIDFLLLAHGHGCEDVAGMCCFNLSDHSESIQKKFQLMKEHVNKIGVDSDPIGSWLRGLFGGIGEWAVHLLKGLLLGLVVILLLVVCLPCLLQIVCGNIRKMINNSISYHTEYKKLQKAYGQPESRIV</sequence>
<name>ENV_AVISR</name>